<comment type="function">
    <text evidence="1">Catalyzes the N-acylation of UDP-3-O-acylglucosamine using 3-hydroxyacyl-ACP as the acyl donor. Is involved in the biosynthesis of lipid A, a phosphorylated glycolipid that anchors the lipopolysaccharide to the outer membrane of the cell.</text>
</comment>
<comment type="catalytic activity">
    <reaction evidence="1">
        <text>a UDP-3-O-[(3R)-3-hydroxyacyl]-alpha-D-glucosamine + a (3R)-hydroxyacyl-[ACP] = a UDP-2-N,3-O-bis[(3R)-3-hydroxyacyl]-alpha-D-glucosamine + holo-[ACP] + H(+)</text>
        <dbReference type="Rhea" id="RHEA:53836"/>
        <dbReference type="Rhea" id="RHEA-COMP:9685"/>
        <dbReference type="Rhea" id="RHEA-COMP:9945"/>
        <dbReference type="ChEBI" id="CHEBI:15378"/>
        <dbReference type="ChEBI" id="CHEBI:64479"/>
        <dbReference type="ChEBI" id="CHEBI:78827"/>
        <dbReference type="ChEBI" id="CHEBI:137740"/>
        <dbReference type="ChEBI" id="CHEBI:137748"/>
        <dbReference type="EC" id="2.3.1.191"/>
    </reaction>
</comment>
<comment type="pathway">
    <text evidence="1">Bacterial outer membrane biogenesis; LPS lipid A biosynthesis.</text>
</comment>
<comment type="subunit">
    <text evidence="1">Homotrimer.</text>
</comment>
<comment type="similarity">
    <text evidence="1">Belongs to the transferase hexapeptide repeat family. LpxD subfamily.</text>
</comment>
<organism>
    <name type="scientific">Acinetobacter baumannii (strain AYE)</name>
    <dbReference type="NCBI Taxonomy" id="509173"/>
    <lineage>
        <taxon>Bacteria</taxon>
        <taxon>Pseudomonadati</taxon>
        <taxon>Pseudomonadota</taxon>
        <taxon>Gammaproteobacteria</taxon>
        <taxon>Moraxellales</taxon>
        <taxon>Moraxellaceae</taxon>
        <taxon>Acinetobacter</taxon>
        <taxon>Acinetobacter calcoaceticus/baumannii complex</taxon>
    </lineage>
</organism>
<proteinExistence type="inferred from homology"/>
<name>LPXD_ACIBY</name>
<keyword id="KW-0012">Acyltransferase</keyword>
<keyword id="KW-0441">Lipid A biosynthesis</keyword>
<keyword id="KW-0444">Lipid biosynthesis</keyword>
<keyword id="KW-0443">Lipid metabolism</keyword>
<keyword id="KW-0677">Repeat</keyword>
<keyword id="KW-0808">Transferase</keyword>
<sequence length="356" mass="38400">MKVQQYRLDELAHLVKGELIGEGSLQFSNLASLENAEVNHLTFVNGEKHLDQAKVSRAGAYIVTAALKEHLPEKDNFIIVDNPYLAFAILTHVFDKKISSTGIESTAQIHPSAVISETAYIGHYVVIGENCVVGDNTVIQSHTKLDDNVEVGKDCFIDSHVTITGGSKLRDRVRIHSSTVIGGEGFGFAPYQGKWHRIAQLGSVLIGNDVRIGSNCSIDRGALDNTILEDGVIIDNLVQIAHNVHIGSNTAIAAKCGIAGSTKIGKNCILAGACGVAGHLSIADNVTLTGMSMVTKNISEAGTYSSGTGLFENNHWKKTIVRLRQLADVPLTQITKRLDHIQAQIESLESTFNLRK</sequence>
<accession>B0V6F7</accession>
<gene>
    <name evidence="1" type="primary">lpxD</name>
    <name type="ordered locus">ABAYE1585</name>
</gene>
<dbReference type="EC" id="2.3.1.191" evidence="1"/>
<dbReference type="EMBL" id="CU459141">
    <property type="protein sequence ID" value="CAM86482.1"/>
    <property type="molecule type" value="Genomic_DNA"/>
</dbReference>
<dbReference type="RefSeq" id="WP_000868103.1">
    <property type="nucleotide sequence ID" value="NZ_JBDGFB010000016.1"/>
</dbReference>
<dbReference type="SMR" id="B0V6F7"/>
<dbReference type="EnsemblBacteria" id="CAM86482">
    <property type="protein sequence ID" value="CAM86482"/>
    <property type="gene ID" value="ABAYE1585"/>
</dbReference>
<dbReference type="GeneID" id="92894229"/>
<dbReference type="KEGG" id="aby:ABAYE1585"/>
<dbReference type="HOGENOM" id="CLU_049865_0_1_6"/>
<dbReference type="UniPathway" id="UPA00973"/>
<dbReference type="GO" id="GO:0016020">
    <property type="term" value="C:membrane"/>
    <property type="evidence" value="ECO:0007669"/>
    <property type="project" value="GOC"/>
</dbReference>
<dbReference type="GO" id="GO:0016410">
    <property type="term" value="F:N-acyltransferase activity"/>
    <property type="evidence" value="ECO:0007669"/>
    <property type="project" value="InterPro"/>
</dbReference>
<dbReference type="GO" id="GO:0009245">
    <property type="term" value="P:lipid A biosynthetic process"/>
    <property type="evidence" value="ECO:0007669"/>
    <property type="project" value="UniProtKB-UniRule"/>
</dbReference>
<dbReference type="CDD" id="cd03352">
    <property type="entry name" value="LbH_LpxD"/>
    <property type="match status" value="1"/>
</dbReference>
<dbReference type="Gene3D" id="1.20.5.170">
    <property type="match status" value="1"/>
</dbReference>
<dbReference type="Gene3D" id="2.160.10.10">
    <property type="entry name" value="Hexapeptide repeat proteins"/>
    <property type="match status" value="1"/>
</dbReference>
<dbReference type="Gene3D" id="3.40.1390.10">
    <property type="entry name" value="MurE/MurF, N-terminal domain"/>
    <property type="match status" value="1"/>
</dbReference>
<dbReference type="HAMAP" id="MF_00523">
    <property type="entry name" value="LpxD"/>
    <property type="match status" value="1"/>
</dbReference>
<dbReference type="InterPro" id="IPR001451">
    <property type="entry name" value="Hexapep"/>
</dbReference>
<dbReference type="InterPro" id="IPR007691">
    <property type="entry name" value="LpxD"/>
</dbReference>
<dbReference type="InterPro" id="IPR011004">
    <property type="entry name" value="Trimer_LpxA-like_sf"/>
</dbReference>
<dbReference type="InterPro" id="IPR020573">
    <property type="entry name" value="UDP_GlcNAc_AcTrfase_non-rep"/>
</dbReference>
<dbReference type="NCBIfam" id="TIGR01853">
    <property type="entry name" value="lipid_A_lpxD"/>
    <property type="match status" value="1"/>
</dbReference>
<dbReference type="NCBIfam" id="NF002060">
    <property type="entry name" value="PRK00892.1"/>
    <property type="match status" value="1"/>
</dbReference>
<dbReference type="PANTHER" id="PTHR43378">
    <property type="entry name" value="UDP-3-O-ACYLGLUCOSAMINE N-ACYLTRANSFERASE"/>
    <property type="match status" value="1"/>
</dbReference>
<dbReference type="PANTHER" id="PTHR43378:SF2">
    <property type="entry name" value="UDP-3-O-ACYLGLUCOSAMINE N-ACYLTRANSFERASE 1, MITOCHONDRIAL-RELATED"/>
    <property type="match status" value="1"/>
</dbReference>
<dbReference type="Pfam" id="PF00132">
    <property type="entry name" value="Hexapep"/>
    <property type="match status" value="2"/>
</dbReference>
<dbReference type="Pfam" id="PF04613">
    <property type="entry name" value="LpxD"/>
    <property type="match status" value="1"/>
</dbReference>
<dbReference type="SUPFAM" id="SSF51161">
    <property type="entry name" value="Trimeric LpxA-like enzymes"/>
    <property type="match status" value="1"/>
</dbReference>
<reference key="1">
    <citation type="journal article" date="2008" name="PLoS ONE">
        <title>Comparative analysis of Acinetobacters: three genomes for three lifestyles.</title>
        <authorList>
            <person name="Vallenet D."/>
            <person name="Nordmann P."/>
            <person name="Barbe V."/>
            <person name="Poirel L."/>
            <person name="Mangenot S."/>
            <person name="Bataille E."/>
            <person name="Dossat C."/>
            <person name="Gas S."/>
            <person name="Kreimeyer A."/>
            <person name="Lenoble P."/>
            <person name="Oztas S."/>
            <person name="Poulain J."/>
            <person name="Segurens B."/>
            <person name="Robert C."/>
            <person name="Abergel C."/>
            <person name="Claverie J.-M."/>
            <person name="Raoult D."/>
            <person name="Medigue C."/>
            <person name="Weissenbach J."/>
            <person name="Cruveiller S."/>
        </authorList>
    </citation>
    <scope>NUCLEOTIDE SEQUENCE [LARGE SCALE GENOMIC DNA]</scope>
    <source>
        <strain>AYE</strain>
    </source>
</reference>
<evidence type="ECO:0000255" key="1">
    <source>
        <dbReference type="HAMAP-Rule" id="MF_00523"/>
    </source>
</evidence>
<protein>
    <recommendedName>
        <fullName evidence="1">UDP-3-O-acylglucosamine N-acyltransferase</fullName>
        <ecNumber evidence="1">2.3.1.191</ecNumber>
    </recommendedName>
</protein>
<feature type="chain" id="PRO_1000127658" description="UDP-3-O-acylglucosamine N-acyltransferase">
    <location>
        <begin position="1"/>
        <end position="356"/>
    </location>
</feature>
<feature type="active site" description="Proton acceptor" evidence="1">
    <location>
        <position position="242"/>
    </location>
</feature>